<gene>
    <name type="primary">ybdJ</name>
    <name type="ordered locus">BSU02000</name>
</gene>
<proteinExistence type="inferred from homology"/>
<reference key="1">
    <citation type="submission" date="1997-07" db="EMBL/GenBank/DDBJ databases">
        <title>Sequence analysis of the 70kb region between 17 and 23 degree of the Bacillus subtilis chromosome.</title>
        <authorList>
            <person name="Haga K."/>
            <person name="Liu H."/>
            <person name="Yasumoto K."/>
            <person name="Takahashi H."/>
            <person name="Yoshikawa H."/>
        </authorList>
    </citation>
    <scope>NUCLEOTIDE SEQUENCE [GENOMIC DNA]</scope>
    <source>
        <strain>168</strain>
    </source>
</reference>
<reference key="2">
    <citation type="journal article" date="1997" name="Nature">
        <title>The complete genome sequence of the Gram-positive bacterium Bacillus subtilis.</title>
        <authorList>
            <person name="Kunst F."/>
            <person name="Ogasawara N."/>
            <person name="Moszer I."/>
            <person name="Albertini A.M."/>
            <person name="Alloni G."/>
            <person name="Azevedo V."/>
            <person name="Bertero M.G."/>
            <person name="Bessieres P."/>
            <person name="Bolotin A."/>
            <person name="Borchert S."/>
            <person name="Borriss R."/>
            <person name="Boursier L."/>
            <person name="Brans A."/>
            <person name="Braun M."/>
            <person name="Brignell S.C."/>
            <person name="Bron S."/>
            <person name="Brouillet S."/>
            <person name="Bruschi C.V."/>
            <person name="Caldwell B."/>
            <person name="Capuano V."/>
            <person name="Carter N.M."/>
            <person name="Choi S.-K."/>
            <person name="Codani J.-J."/>
            <person name="Connerton I.F."/>
            <person name="Cummings N.J."/>
            <person name="Daniel R.A."/>
            <person name="Denizot F."/>
            <person name="Devine K.M."/>
            <person name="Duesterhoeft A."/>
            <person name="Ehrlich S.D."/>
            <person name="Emmerson P.T."/>
            <person name="Entian K.-D."/>
            <person name="Errington J."/>
            <person name="Fabret C."/>
            <person name="Ferrari E."/>
            <person name="Foulger D."/>
            <person name="Fritz C."/>
            <person name="Fujita M."/>
            <person name="Fujita Y."/>
            <person name="Fuma S."/>
            <person name="Galizzi A."/>
            <person name="Galleron N."/>
            <person name="Ghim S.-Y."/>
            <person name="Glaser P."/>
            <person name="Goffeau A."/>
            <person name="Golightly E.J."/>
            <person name="Grandi G."/>
            <person name="Guiseppi G."/>
            <person name="Guy B.J."/>
            <person name="Haga K."/>
            <person name="Haiech J."/>
            <person name="Harwood C.R."/>
            <person name="Henaut A."/>
            <person name="Hilbert H."/>
            <person name="Holsappel S."/>
            <person name="Hosono S."/>
            <person name="Hullo M.-F."/>
            <person name="Itaya M."/>
            <person name="Jones L.-M."/>
            <person name="Joris B."/>
            <person name="Karamata D."/>
            <person name="Kasahara Y."/>
            <person name="Klaerr-Blanchard M."/>
            <person name="Klein C."/>
            <person name="Kobayashi Y."/>
            <person name="Koetter P."/>
            <person name="Koningstein G."/>
            <person name="Krogh S."/>
            <person name="Kumano M."/>
            <person name="Kurita K."/>
            <person name="Lapidus A."/>
            <person name="Lardinois S."/>
            <person name="Lauber J."/>
            <person name="Lazarevic V."/>
            <person name="Lee S.-M."/>
            <person name="Levine A."/>
            <person name="Liu H."/>
            <person name="Masuda S."/>
            <person name="Mauel C."/>
            <person name="Medigue C."/>
            <person name="Medina N."/>
            <person name="Mellado R.P."/>
            <person name="Mizuno M."/>
            <person name="Moestl D."/>
            <person name="Nakai S."/>
            <person name="Noback M."/>
            <person name="Noone D."/>
            <person name="O'Reilly M."/>
            <person name="Ogawa K."/>
            <person name="Ogiwara A."/>
            <person name="Oudega B."/>
            <person name="Park S.-H."/>
            <person name="Parro V."/>
            <person name="Pohl T.M."/>
            <person name="Portetelle D."/>
            <person name="Porwollik S."/>
            <person name="Prescott A.M."/>
            <person name="Presecan E."/>
            <person name="Pujic P."/>
            <person name="Purnelle B."/>
            <person name="Rapoport G."/>
            <person name="Rey M."/>
            <person name="Reynolds S."/>
            <person name="Rieger M."/>
            <person name="Rivolta C."/>
            <person name="Rocha E."/>
            <person name="Roche B."/>
            <person name="Rose M."/>
            <person name="Sadaie Y."/>
            <person name="Sato T."/>
            <person name="Scanlan E."/>
            <person name="Schleich S."/>
            <person name="Schroeter R."/>
            <person name="Scoffone F."/>
            <person name="Sekiguchi J."/>
            <person name="Sekowska A."/>
            <person name="Seror S.J."/>
            <person name="Serror P."/>
            <person name="Shin B.-S."/>
            <person name="Soldo B."/>
            <person name="Sorokin A."/>
            <person name="Tacconi E."/>
            <person name="Takagi T."/>
            <person name="Takahashi H."/>
            <person name="Takemaru K."/>
            <person name="Takeuchi M."/>
            <person name="Tamakoshi A."/>
            <person name="Tanaka T."/>
            <person name="Terpstra P."/>
            <person name="Tognoni A."/>
            <person name="Tosato V."/>
            <person name="Uchiyama S."/>
            <person name="Vandenbol M."/>
            <person name="Vannier F."/>
            <person name="Vassarotti A."/>
            <person name="Viari A."/>
            <person name="Wambutt R."/>
            <person name="Wedler E."/>
            <person name="Wedler H."/>
            <person name="Weitzenegger T."/>
            <person name="Winters P."/>
            <person name="Wipat A."/>
            <person name="Yamamoto H."/>
            <person name="Yamane K."/>
            <person name="Yasumoto K."/>
            <person name="Yata K."/>
            <person name="Yoshida K."/>
            <person name="Yoshikawa H.-F."/>
            <person name="Zumstein E."/>
            <person name="Yoshikawa H."/>
            <person name="Danchin A."/>
        </authorList>
    </citation>
    <scope>NUCLEOTIDE SEQUENCE [LARGE SCALE GENOMIC DNA]</scope>
    <source>
        <strain>168</strain>
    </source>
</reference>
<reference key="3">
    <citation type="journal article" date="2001" name="J. Bacteriol.">
        <title>Comprehensive DNA microarray analysis of Bacillus subtilis two-component regulatory systems.</title>
        <authorList>
            <person name="Kobayashi K."/>
            <person name="Ogura M."/>
            <person name="Yamaguchi H."/>
            <person name="Yoshida K."/>
            <person name="Ogasawara N."/>
            <person name="Tanaka T."/>
            <person name="Fujita Y."/>
        </authorList>
    </citation>
    <scope>FUNCTION</scope>
</reference>
<dbReference type="EMBL" id="AB006424">
    <property type="protein sequence ID" value="BAA33098.1"/>
    <property type="molecule type" value="Genomic_DNA"/>
</dbReference>
<dbReference type="EMBL" id="AL009126">
    <property type="protein sequence ID" value="CAB11994.1"/>
    <property type="molecule type" value="Genomic_DNA"/>
</dbReference>
<dbReference type="PIR" id="E69747">
    <property type="entry name" value="E69747"/>
</dbReference>
<dbReference type="RefSeq" id="NP_388082.1">
    <property type="nucleotide sequence ID" value="NC_000964.3"/>
</dbReference>
<dbReference type="RefSeq" id="WP_003234895.1">
    <property type="nucleotide sequence ID" value="NZ_OZ025638.1"/>
</dbReference>
<dbReference type="SMR" id="O31432"/>
<dbReference type="FunCoup" id="O31432">
    <property type="interactions" value="31"/>
</dbReference>
<dbReference type="STRING" id="224308.BSU02000"/>
<dbReference type="PaxDb" id="224308-BSU02000"/>
<dbReference type="EnsemblBacteria" id="CAB11994">
    <property type="protein sequence ID" value="CAB11994"/>
    <property type="gene ID" value="BSU_02000"/>
</dbReference>
<dbReference type="GeneID" id="938485"/>
<dbReference type="KEGG" id="bsu:BSU02000"/>
<dbReference type="PATRIC" id="fig|224308.179.peg.206"/>
<dbReference type="eggNOG" id="COG0745">
    <property type="taxonomic scope" value="Bacteria"/>
</dbReference>
<dbReference type="InParanoid" id="O31432"/>
<dbReference type="OrthoDB" id="9802426at2"/>
<dbReference type="PhylomeDB" id="O31432"/>
<dbReference type="BioCyc" id="BSUB:BSU02000-MONOMER"/>
<dbReference type="Proteomes" id="UP000001570">
    <property type="component" value="Chromosome"/>
</dbReference>
<dbReference type="GO" id="GO:0005829">
    <property type="term" value="C:cytosol"/>
    <property type="evidence" value="ECO:0000318"/>
    <property type="project" value="GO_Central"/>
</dbReference>
<dbReference type="GO" id="GO:0032993">
    <property type="term" value="C:protein-DNA complex"/>
    <property type="evidence" value="ECO:0000318"/>
    <property type="project" value="GO_Central"/>
</dbReference>
<dbReference type="GO" id="GO:0000156">
    <property type="term" value="F:phosphorelay response regulator activity"/>
    <property type="evidence" value="ECO:0000318"/>
    <property type="project" value="GO_Central"/>
</dbReference>
<dbReference type="GO" id="GO:0000976">
    <property type="term" value="F:transcription cis-regulatory region binding"/>
    <property type="evidence" value="ECO:0000318"/>
    <property type="project" value="GO_Central"/>
</dbReference>
<dbReference type="GO" id="GO:0006355">
    <property type="term" value="P:regulation of DNA-templated transcription"/>
    <property type="evidence" value="ECO:0000318"/>
    <property type="project" value="GO_Central"/>
</dbReference>
<dbReference type="CDD" id="cd17574">
    <property type="entry name" value="REC_OmpR"/>
    <property type="match status" value="1"/>
</dbReference>
<dbReference type="CDD" id="cd00383">
    <property type="entry name" value="trans_reg_C"/>
    <property type="match status" value="1"/>
</dbReference>
<dbReference type="FunFam" id="1.10.10.10:FF:000568">
    <property type="entry name" value="Two-component system response regulator"/>
    <property type="match status" value="1"/>
</dbReference>
<dbReference type="Gene3D" id="3.40.50.2300">
    <property type="match status" value="1"/>
</dbReference>
<dbReference type="Gene3D" id="1.10.10.10">
    <property type="entry name" value="Winged helix-like DNA-binding domain superfamily/Winged helix DNA-binding domain"/>
    <property type="match status" value="1"/>
</dbReference>
<dbReference type="InterPro" id="IPR011006">
    <property type="entry name" value="CheY-like_superfamily"/>
</dbReference>
<dbReference type="InterPro" id="IPR001867">
    <property type="entry name" value="OmpR/PhoB-type_DNA-bd"/>
</dbReference>
<dbReference type="InterPro" id="IPR016032">
    <property type="entry name" value="Sig_transdc_resp-reg_C-effctor"/>
</dbReference>
<dbReference type="InterPro" id="IPR001789">
    <property type="entry name" value="Sig_transdc_resp-reg_receiver"/>
</dbReference>
<dbReference type="InterPro" id="IPR039420">
    <property type="entry name" value="WalR-like"/>
</dbReference>
<dbReference type="InterPro" id="IPR036388">
    <property type="entry name" value="WH-like_DNA-bd_sf"/>
</dbReference>
<dbReference type="PANTHER" id="PTHR48111">
    <property type="entry name" value="REGULATOR OF RPOS"/>
    <property type="match status" value="1"/>
</dbReference>
<dbReference type="PANTHER" id="PTHR48111:SF70">
    <property type="entry name" value="TWO-COMPONENT RESPONSE REGULATOR YBDJ"/>
    <property type="match status" value="1"/>
</dbReference>
<dbReference type="Pfam" id="PF00072">
    <property type="entry name" value="Response_reg"/>
    <property type="match status" value="1"/>
</dbReference>
<dbReference type="Pfam" id="PF00486">
    <property type="entry name" value="Trans_reg_C"/>
    <property type="match status" value="1"/>
</dbReference>
<dbReference type="SMART" id="SM00448">
    <property type="entry name" value="REC"/>
    <property type="match status" value="1"/>
</dbReference>
<dbReference type="SMART" id="SM00862">
    <property type="entry name" value="Trans_reg_C"/>
    <property type="match status" value="1"/>
</dbReference>
<dbReference type="SUPFAM" id="SSF46894">
    <property type="entry name" value="C-terminal effector domain of the bipartite response regulators"/>
    <property type="match status" value="1"/>
</dbReference>
<dbReference type="SUPFAM" id="SSF52172">
    <property type="entry name" value="CheY-like"/>
    <property type="match status" value="1"/>
</dbReference>
<dbReference type="PROSITE" id="PS51755">
    <property type="entry name" value="OMPR_PHOB"/>
    <property type="match status" value="1"/>
</dbReference>
<dbReference type="PROSITE" id="PS50110">
    <property type="entry name" value="RESPONSE_REGULATORY"/>
    <property type="match status" value="1"/>
</dbReference>
<keyword id="KW-0963">Cytoplasm</keyword>
<keyword id="KW-0238">DNA-binding</keyword>
<keyword id="KW-0597">Phosphoprotein</keyword>
<keyword id="KW-1185">Reference proteome</keyword>
<keyword id="KW-0804">Transcription</keyword>
<keyword id="KW-0805">Transcription regulation</keyword>
<keyword id="KW-0902">Two-component regulatory system</keyword>
<name>YBDJ_BACSU</name>
<sequence>MKGYRILIVEDDVMIGDLLQKILQREGYRVIWKTDGADVLSVIQKVDLVIMDVMLPGEDGYQMSAKIKKLGLGIPVIFLSARNDMDSKLQGLQIGEDYMVKPFDPRELLLRMRNMLEHHYGTFTQIKHLYIDAVTKKVFNESLHDEVLFTAIERKIFFYLYENRDSILTKEHFFEYLWQLEDRNPNIVNVHIKKIRAKINDQAGEMIENIYGEGYRLNTVVKK</sequence>
<protein>
    <recommendedName>
        <fullName>Uncharacterized transcriptional regulatory protein YbdJ</fullName>
    </recommendedName>
</protein>
<evidence type="ECO:0000250" key="1"/>
<evidence type="ECO:0000255" key="2">
    <source>
        <dbReference type="PROSITE-ProRule" id="PRU00169"/>
    </source>
</evidence>
<evidence type="ECO:0000255" key="3">
    <source>
        <dbReference type="PROSITE-ProRule" id="PRU01091"/>
    </source>
</evidence>
<evidence type="ECO:0000269" key="4">
    <source>
    </source>
</evidence>
<evidence type="ECO:0000305" key="5"/>
<comment type="function">
    <text evidence="4">Member of the two-component regulatory system YbdK/YbdJ.</text>
</comment>
<comment type="subcellular location">
    <subcellularLocation>
        <location evidence="5">Cytoplasm</location>
    </subcellularLocation>
</comment>
<comment type="PTM">
    <text evidence="1">Phosphorylated by YbdK.</text>
</comment>
<feature type="chain" id="PRO_0000360773" description="Uncharacterized transcriptional regulatory protein YbdJ">
    <location>
        <begin position="1"/>
        <end position="223"/>
    </location>
</feature>
<feature type="domain" description="Response regulatory" evidence="2">
    <location>
        <begin position="5"/>
        <end position="116"/>
    </location>
</feature>
<feature type="DNA-binding region" description="OmpR/PhoB-type" evidence="3">
    <location>
        <begin position="121"/>
        <end position="219"/>
    </location>
</feature>
<feature type="modified residue" description="4-aspartylphosphate" evidence="2">
    <location>
        <position position="52"/>
    </location>
</feature>
<organism>
    <name type="scientific">Bacillus subtilis (strain 168)</name>
    <dbReference type="NCBI Taxonomy" id="224308"/>
    <lineage>
        <taxon>Bacteria</taxon>
        <taxon>Bacillati</taxon>
        <taxon>Bacillota</taxon>
        <taxon>Bacilli</taxon>
        <taxon>Bacillales</taxon>
        <taxon>Bacillaceae</taxon>
        <taxon>Bacillus</taxon>
    </lineage>
</organism>
<accession>O31432</accession>
<accession>Q7DL58</accession>